<protein>
    <recommendedName>
        <fullName evidence="1">Large ribosomal subunit protein bL17</fullName>
    </recommendedName>
    <alternativeName>
        <fullName evidence="3">50S ribosomal protein L17</fullName>
    </alternativeName>
</protein>
<sequence>MRHRVGGWKLGRNTEHRRALLRNLVTSLIVEERIETTVPKAKAMRPHVEKMITLGKQGNVAARRQAAAYLMTSEAVDKLFNTISPRFGDREGGYLRIVRTGFRPGDGGEKAFIELLGSEKIIDEKREKRAAARAKRAEDNRKALEAQQAQAEAETTGETKA</sequence>
<accession>Q1IS92</accession>
<gene>
    <name evidence="1" type="primary">rplQ</name>
    <name type="ordered locus">Acid345_1256</name>
</gene>
<reference key="1">
    <citation type="journal article" date="2009" name="Appl. Environ. Microbiol.">
        <title>Three genomes from the phylum Acidobacteria provide insight into the lifestyles of these microorganisms in soils.</title>
        <authorList>
            <person name="Ward N.L."/>
            <person name="Challacombe J.F."/>
            <person name="Janssen P.H."/>
            <person name="Henrissat B."/>
            <person name="Coutinho P.M."/>
            <person name="Wu M."/>
            <person name="Xie G."/>
            <person name="Haft D.H."/>
            <person name="Sait M."/>
            <person name="Badger J."/>
            <person name="Barabote R.D."/>
            <person name="Bradley B."/>
            <person name="Brettin T.S."/>
            <person name="Brinkac L.M."/>
            <person name="Bruce D."/>
            <person name="Creasy T."/>
            <person name="Daugherty S.C."/>
            <person name="Davidsen T.M."/>
            <person name="DeBoy R.T."/>
            <person name="Detter J.C."/>
            <person name="Dodson R.J."/>
            <person name="Durkin A.S."/>
            <person name="Ganapathy A."/>
            <person name="Gwinn-Giglio M."/>
            <person name="Han C.S."/>
            <person name="Khouri H."/>
            <person name="Kiss H."/>
            <person name="Kothari S.P."/>
            <person name="Madupu R."/>
            <person name="Nelson K.E."/>
            <person name="Nelson W.C."/>
            <person name="Paulsen I."/>
            <person name="Penn K."/>
            <person name="Ren Q."/>
            <person name="Rosovitz M.J."/>
            <person name="Selengut J.D."/>
            <person name="Shrivastava S."/>
            <person name="Sullivan S.A."/>
            <person name="Tapia R."/>
            <person name="Thompson L.S."/>
            <person name="Watkins K.L."/>
            <person name="Yang Q."/>
            <person name="Yu C."/>
            <person name="Zafar N."/>
            <person name="Zhou L."/>
            <person name="Kuske C.R."/>
        </authorList>
    </citation>
    <scope>NUCLEOTIDE SEQUENCE [LARGE SCALE GENOMIC DNA]</scope>
    <source>
        <strain>Ellin345</strain>
    </source>
</reference>
<comment type="subunit">
    <text evidence="1">Part of the 50S ribosomal subunit. Contacts protein L32.</text>
</comment>
<comment type="similarity">
    <text evidence="1">Belongs to the bacterial ribosomal protein bL17 family.</text>
</comment>
<feature type="chain" id="PRO_0000267813" description="Large ribosomal subunit protein bL17">
    <location>
        <begin position="1"/>
        <end position="161"/>
    </location>
</feature>
<feature type="region of interest" description="Disordered" evidence="2">
    <location>
        <begin position="132"/>
        <end position="161"/>
    </location>
</feature>
<feature type="compositionally biased region" description="Basic and acidic residues" evidence="2">
    <location>
        <begin position="132"/>
        <end position="144"/>
    </location>
</feature>
<feature type="compositionally biased region" description="Low complexity" evidence="2">
    <location>
        <begin position="145"/>
        <end position="161"/>
    </location>
</feature>
<evidence type="ECO:0000255" key="1">
    <source>
        <dbReference type="HAMAP-Rule" id="MF_01368"/>
    </source>
</evidence>
<evidence type="ECO:0000256" key="2">
    <source>
        <dbReference type="SAM" id="MobiDB-lite"/>
    </source>
</evidence>
<evidence type="ECO:0000305" key="3"/>
<name>RL17_KORVE</name>
<keyword id="KW-1185">Reference proteome</keyword>
<keyword id="KW-0687">Ribonucleoprotein</keyword>
<keyword id="KW-0689">Ribosomal protein</keyword>
<dbReference type="EMBL" id="CP000360">
    <property type="protein sequence ID" value="ABF40258.1"/>
    <property type="molecule type" value="Genomic_DNA"/>
</dbReference>
<dbReference type="RefSeq" id="WP_011522060.1">
    <property type="nucleotide sequence ID" value="NC_008009.1"/>
</dbReference>
<dbReference type="SMR" id="Q1IS92"/>
<dbReference type="STRING" id="204669.Acid345_1256"/>
<dbReference type="EnsemblBacteria" id="ABF40258">
    <property type="protein sequence ID" value="ABF40258"/>
    <property type="gene ID" value="Acid345_1256"/>
</dbReference>
<dbReference type="KEGG" id="aba:Acid345_1256"/>
<dbReference type="eggNOG" id="COG0203">
    <property type="taxonomic scope" value="Bacteria"/>
</dbReference>
<dbReference type="HOGENOM" id="CLU_074407_0_1_0"/>
<dbReference type="OrthoDB" id="9809073at2"/>
<dbReference type="Proteomes" id="UP000002432">
    <property type="component" value="Chromosome"/>
</dbReference>
<dbReference type="GO" id="GO:0022625">
    <property type="term" value="C:cytosolic large ribosomal subunit"/>
    <property type="evidence" value="ECO:0007669"/>
    <property type="project" value="TreeGrafter"/>
</dbReference>
<dbReference type="GO" id="GO:0003735">
    <property type="term" value="F:structural constituent of ribosome"/>
    <property type="evidence" value="ECO:0007669"/>
    <property type="project" value="InterPro"/>
</dbReference>
<dbReference type="GO" id="GO:0006412">
    <property type="term" value="P:translation"/>
    <property type="evidence" value="ECO:0007669"/>
    <property type="project" value="UniProtKB-UniRule"/>
</dbReference>
<dbReference type="Gene3D" id="3.90.1030.10">
    <property type="entry name" value="Ribosomal protein L17"/>
    <property type="match status" value="1"/>
</dbReference>
<dbReference type="HAMAP" id="MF_01368">
    <property type="entry name" value="Ribosomal_bL17"/>
    <property type="match status" value="1"/>
</dbReference>
<dbReference type="InterPro" id="IPR000456">
    <property type="entry name" value="Ribosomal_bL17"/>
</dbReference>
<dbReference type="InterPro" id="IPR047859">
    <property type="entry name" value="Ribosomal_bL17_CS"/>
</dbReference>
<dbReference type="InterPro" id="IPR036373">
    <property type="entry name" value="Ribosomal_bL17_sf"/>
</dbReference>
<dbReference type="NCBIfam" id="TIGR00059">
    <property type="entry name" value="L17"/>
    <property type="match status" value="1"/>
</dbReference>
<dbReference type="PANTHER" id="PTHR14413:SF16">
    <property type="entry name" value="LARGE RIBOSOMAL SUBUNIT PROTEIN BL17M"/>
    <property type="match status" value="1"/>
</dbReference>
<dbReference type="PANTHER" id="PTHR14413">
    <property type="entry name" value="RIBOSOMAL PROTEIN L17"/>
    <property type="match status" value="1"/>
</dbReference>
<dbReference type="Pfam" id="PF01196">
    <property type="entry name" value="Ribosomal_L17"/>
    <property type="match status" value="1"/>
</dbReference>
<dbReference type="SUPFAM" id="SSF64263">
    <property type="entry name" value="Prokaryotic ribosomal protein L17"/>
    <property type="match status" value="1"/>
</dbReference>
<dbReference type="PROSITE" id="PS01167">
    <property type="entry name" value="RIBOSOMAL_L17"/>
    <property type="match status" value="1"/>
</dbReference>
<proteinExistence type="inferred from homology"/>
<organism>
    <name type="scientific">Koribacter versatilis (strain Ellin345)</name>
    <dbReference type="NCBI Taxonomy" id="204669"/>
    <lineage>
        <taxon>Bacteria</taxon>
        <taxon>Pseudomonadati</taxon>
        <taxon>Acidobacteriota</taxon>
        <taxon>Terriglobia</taxon>
        <taxon>Terriglobales</taxon>
        <taxon>Candidatus Korobacteraceae</taxon>
        <taxon>Candidatus Korobacter</taxon>
    </lineage>
</organism>